<sequence length="300" mass="33300">MNQESSFRAPPKRRVRGSNPNISNPHQLFDDTSGGPVPHGGDFPNHSSPALGIPAQAFLSEPMSNFAMAYGSSLASQGKEMMDKNIDRIIPVSKIKYYFAVDTVYVGKKIGLLMFPYMHQDWEVRYQQDTPVAPRFDINAPDLYIPVMAFITYILVAGLALGTQSRFSPEILGMQASSALAWLIVEVLAILLSLYLVTVNTDLTTVDLVAFSGYKYVGMISGVIAGLLFGNTGYYVVLAWCCISIVFFMIRTLRLKILSEAAAEGVLVRGARNQLRMYLTMAIAAVQPIFMYWLTYHLVR</sequence>
<comment type="function">
    <text evidence="2 3">Functions in endoplasmic reticulum to Golgi vesicle-mediated transport and regulates the proper organization of the endoplasmic reticulum and the Golgi (By similarity). Plays a key role in targeting to neuronal dendrites receptors such as HTR1A (By similarity). Plays also a role in primary cilium and sperm flagellum assembly probably through protein transport to these compartments (By similarity).</text>
</comment>
<comment type="subcellular location">
    <subcellularLocation>
        <location evidence="1">Endoplasmic reticulum membrane</location>
        <topology evidence="4">Multi-pass membrane protein</topology>
    </subcellularLocation>
    <subcellularLocation>
        <location evidence="1">Golgi apparatus membrane</location>
        <topology evidence="4">Multi-pass membrane protein</topology>
    </subcellularLocation>
    <subcellularLocation>
        <location evidence="1">Endoplasmic reticulum-Golgi intermediate compartment membrane</location>
        <topology evidence="4">Multi-pass membrane protein</topology>
    </subcellularLocation>
    <text evidence="1">Shuttles between the endoplasmic reticulum, the intermediate compartment and the Golgi apparatus.</text>
</comment>
<comment type="similarity">
    <text evidence="6">Belongs to the YIF1 family.</text>
</comment>
<proteinExistence type="evidence at transcript level"/>
<gene>
    <name type="primary">yif1b-b</name>
</gene>
<evidence type="ECO:0000250" key="1">
    <source>
        <dbReference type="UniProtKB" id="Q5BJH7"/>
    </source>
</evidence>
<evidence type="ECO:0000250" key="2">
    <source>
        <dbReference type="UniProtKB" id="Q6PEC3"/>
    </source>
</evidence>
<evidence type="ECO:0000250" key="3">
    <source>
        <dbReference type="UniProtKB" id="Q9CX30"/>
    </source>
</evidence>
<evidence type="ECO:0000255" key="4"/>
<evidence type="ECO:0000256" key="5">
    <source>
        <dbReference type="SAM" id="MobiDB-lite"/>
    </source>
</evidence>
<evidence type="ECO:0000305" key="6"/>
<keyword id="KW-0256">Endoplasmic reticulum</keyword>
<keyword id="KW-0333">Golgi apparatus</keyword>
<keyword id="KW-0472">Membrane</keyword>
<keyword id="KW-0653">Protein transport</keyword>
<keyword id="KW-1185">Reference proteome</keyword>
<keyword id="KW-0812">Transmembrane</keyword>
<keyword id="KW-1133">Transmembrane helix</keyword>
<keyword id="KW-0813">Transport</keyword>
<accession>Q4FZQ0</accession>
<accession>Q6INH2</accession>
<reference key="1">
    <citation type="submission" date="2005-07" db="EMBL/GenBank/DDBJ databases">
        <authorList>
            <consortium name="NIH - Xenopus Gene Collection (XGC) project"/>
        </authorList>
    </citation>
    <scope>NUCLEOTIDE SEQUENCE [LARGE SCALE MRNA]</scope>
    <source>
        <tissue>Embryo</tissue>
        <tissue>Ovary</tissue>
    </source>
</reference>
<feature type="chain" id="PRO_0000307263" description="Protein YIF1B-B">
    <location>
        <begin position="1"/>
        <end position="300"/>
    </location>
</feature>
<feature type="topological domain" description="Cytoplasmic" evidence="4">
    <location>
        <begin position="1"/>
        <end position="142"/>
    </location>
</feature>
<feature type="transmembrane region" description="Helical" evidence="4">
    <location>
        <begin position="143"/>
        <end position="163"/>
    </location>
</feature>
<feature type="topological domain" description="Extracellular" evidence="4">
    <location>
        <begin position="164"/>
        <end position="178"/>
    </location>
</feature>
<feature type="transmembrane region" description="Helical" evidence="4">
    <location>
        <begin position="179"/>
        <end position="199"/>
    </location>
</feature>
<feature type="topological domain" description="Cytoplasmic" evidence="4">
    <location>
        <begin position="200"/>
        <end position="205"/>
    </location>
</feature>
<feature type="transmembrane region" description="Helical" evidence="4">
    <location>
        <begin position="206"/>
        <end position="226"/>
    </location>
</feature>
<feature type="topological domain" description="Extracellular" evidence="4">
    <location>
        <position position="227"/>
    </location>
</feature>
<feature type="transmembrane region" description="Helical" evidence="4">
    <location>
        <begin position="228"/>
        <end position="248"/>
    </location>
</feature>
<feature type="topological domain" description="Cytoplasmic" evidence="4">
    <location>
        <begin position="249"/>
        <end position="278"/>
    </location>
</feature>
<feature type="transmembrane region" description="Helical" evidence="4">
    <location>
        <begin position="279"/>
        <end position="299"/>
    </location>
</feature>
<feature type="topological domain" description="Extracellular" evidence="4">
    <location>
        <position position="300"/>
    </location>
</feature>
<feature type="region of interest" description="Disordered" evidence="5">
    <location>
        <begin position="1"/>
        <end position="46"/>
    </location>
</feature>
<dbReference type="EMBL" id="BC072309">
    <property type="protein sequence ID" value="AAH72309.1"/>
    <property type="molecule type" value="mRNA"/>
</dbReference>
<dbReference type="EMBL" id="BC099271">
    <property type="protein sequence ID" value="AAH99271.1"/>
    <property type="molecule type" value="mRNA"/>
</dbReference>
<dbReference type="RefSeq" id="NP_001085082.1">
    <property type="nucleotide sequence ID" value="NM_001091613.1"/>
</dbReference>
<dbReference type="SMR" id="Q4FZQ0"/>
<dbReference type="DNASU" id="432153"/>
<dbReference type="GeneID" id="432153"/>
<dbReference type="KEGG" id="xla:432153"/>
<dbReference type="AGR" id="Xenbase:XB-GENE-922895"/>
<dbReference type="CTD" id="432153"/>
<dbReference type="Xenbase" id="XB-GENE-922895">
    <property type="gene designation" value="yif1b.L"/>
</dbReference>
<dbReference type="OrthoDB" id="337750at2759"/>
<dbReference type="Proteomes" id="UP000186698">
    <property type="component" value="Chromosome 8L"/>
</dbReference>
<dbReference type="Bgee" id="432153">
    <property type="expression patterns" value="Expressed in testis and 19 other cell types or tissues"/>
</dbReference>
<dbReference type="GO" id="GO:0030134">
    <property type="term" value="C:COPII-coated ER to Golgi transport vesicle"/>
    <property type="evidence" value="ECO:0000318"/>
    <property type="project" value="GO_Central"/>
</dbReference>
<dbReference type="GO" id="GO:0005783">
    <property type="term" value="C:endoplasmic reticulum"/>
    <property type="evidence" value="ECO:0000250"/>
    <property type="project" value="UniProtKB"/>
</dbReference>
<dbReference type="GO" id="GO:0005789">
    <property type="term" value="C:endoplasmic reticulum membrane"/>
    <property type="evidence" value="ECO:0000318"/>
    <property type="project" value="GO_Central"/>
</dbReference>
<dbReference type="GO" id="GO:0005793">
    <property type="term" value="C:endoplasmic reticulum-Golgi intermediate compartment"/>
    <property type="evidence" value="ECO:0000250"/>
    <property type="project" value="UniProtKB"/>
</dbReference>
<dbReference type="GO" id="GO:0033116">
    <property type="term" value="C:endoplasmic reticulum-Golgi intermediate compartment membrane"/>
    <property type="evidence" value="ECO:0007669"/>
    <property type="project" value="UniProtKB-SubCell"/>
</dbReference>
<dbReference type="GO" id="GO:0005794">
    <property type="term" value="C:Golgi apparatus"/>
    <property type="evidence" value="ECO:0000250"/>
    <property type="project" value="UniProtKB"/>
</dbReference>
<dbReference type="GO" id="GO:0000139">
    <property type="term" value="C:Golgi membrane"/>
    <property type="evidence" value="ECO:0000318"/>
    <property type="project" value="GO_Central"/>
</dbReference>
<dbReference type="GO" id="GO:0060271">
    <property type="term" value="P:cilium assembly"/>
    <property type="evidence" value="ECO:0000250"/>
    <property type="project" value="UniProtKB"/>
</dbReference>
<dbReference type="GO" id="GO:0006888">
    <property type="term" value="P:endoplasmic reticulum to Golgi vesicle-mediated transport"/>
    <property type="evidence" value="ECO:0000250"/>
    <property type="project" value="UniProtKB"/>
</dbReference>
<dbReference type="GO" id="GO:0015031">
    <property type="term" value="P:protein transport"/>
    <property type="evidence" value="ECO:0007669"/>
    <property type="project" value="UniProtKB-KW"/>
</dbReference>
<dbReference type="GO" id="GO:0120316">
    <property type="term" value="P:sperm flagellum assembly"/>
    <property type="evidence" value="ECO:0000250"/>
    <property type="project" value="UniProtKB"/>
</dbReference>
<dbReference type="InterPro" id="IPR005578">
    <property type="entry name" value="Yif1_fam"/>
</dbReference>
<dbReference type="PANTHER" id="PTHR14083:SF1">
    <property type="entry name" value="PROTEIN YIF1B"/>
    <property type="match status" value="1"/>
</dbReference>
<dbReference type="PANTHER" id="PTHR14083">
    <property type="entry name" value="YIP1 INTERACTING FACTOR HOMOLOG YIF1 PROTEIN"/>
    <property type="match status" value="1"/>
</dbReference>
<dbReference type="Pfam" id="PF03878">
    <property type="entry name" value="YIF1"/>
    <property type="match status" value="1"/>
</dbReference>
<organism>
    <name type="scientific">Xenopus laevis</name>
    <name type="common">African clawed frog</name>
    <dbReference type="NCBI Taxonomy" id="8355"/>
    <lineage>
        <taxon>Eukaryota</taxon>
        <taxon>Metazoa</taxon>
        <taxon>Chordata</taxon>
        <taxon>Craniata</taxon>
        <taxon>Vertebrata</taxon>
        <taxon>Euteleostomi</taxon>
        <taxon>Amphibia</taxon>
        <taxon>Batrachia</taxon>
        <taxon>Anura</taxon>
        <taxon>Pipoidea</taxon>
        <taxon>Pipidae</taxon>
        <taxon>Xenopodinae</taxon>
        <taxon>Xenopus</taxon>
        <taxon>Xenopus</taxon>
    </lineage>
</organism>
<name>YF1BB_XENLA</name>
<protein>
    <recommendedName>
        <fullName>Protein YIF1B-B</fullName>
    </recommendedName>
    <alternativeName>
        <fullName>YIP1-interacting factor homolog B-B</fullName>
    </alternativeName>
</protein>